<protein>
    <recommendedName>
        <fullName evidence="4">Secreted protein C</fullName>
    </recommendedName>
</protein>
<name>SCTC_DICDI</name>
<keyword id="KW-0325">Glycoprotein</keyword>
<keyword id="KW-1185">Reference proteome</keyword>
<keyword id="KW-0964">Secreted</keyword>
<keyword id="KW-0732">Signal</keyword>
<accession>Q54KD5</accession>
<dbReference type="EMBL" id="AAFI02000100">
    <property type="protein sequence ID" value="EAL63767.1"/>
    <property type="molecule type" value="Genomic_DNA"/>
</dbReference>
<dbReference type="RefSeq" id="XP_637288.1">
    <property type="nucleotide sequence ID" value="XM_632196.1"/>
</dbReference>
<dbReference type="STRING" id="44689.Q54KD5"/>
<dbReference type="GlyCosmos" id="Q54KD5">
    <property type="glycosylation" value="8 sites, No reported glycans"/>
</dbReference>
<dbReference type="GlyGen" id="Q54KD5">
    <property type="glycosylation" value="8 sites"/>
</dbReference>
<dbReference type="PaxDb" id="44689-DDB0187468"/>
<dbReference type="EnsemblProtists" id="EAL63767">
    <property type="protein sequence ID" value="EAL63767"/>
    <property type="gene ID" value="DDB_G0287399"/>
</dbReference>
<dbReference type="GeneID" id="8626120"/>
<dbReference type="KEGG" id="ddi:DDB_G0287399"/>
<dbReference type="dictyBase" id="DDB_G0287399"/>
<dbReference type="VEuPathDB" id="AmoebaDB:DDB_G0287399"/>
<dbReference type="eggNOG" id="ENOG502RI07">
    <property type="taxonomic scope" value="Eukaryota"/>
</dbReference>
<dbReference type="HOGENOM" id="CLU_561933_0_0_1"/>
<dbReference type="InParanoid" id="Q54KD5"/>
<dbReference type="OMA" id="ETIHIFA"/>
<dbReference type="PRO" id="PR:Q54KD5"/>
<dbReference type="Proteomes" id="UP000002195">
    <property type="component" value="Chromosome 5"/>
</dbReference>
<dbReference type="GO" id="GO:0005576">
    <property type="term" value="C:extracellular region"/>
    <property type="evidence" value="ECO:0007669"/>
    <property type="project" value="UniProtKB-SubCell"/>
</dbReference>
<dbReference type="CDD" id="cd22935">
    <property type="entry name" value="SctA-like"/>
    <property type="match status" value="1"/>
</dbReference>
<dbReference type="PANTHER" id="PTHR38742">
    <property type="entry name" value="PROTEIN GP17"/>
    <property type="match status" value="1"/>
</dbReference>
<dbReference type="PANTHER" id="PTHR38742:SF1">
    <property type="entry name" value="SECRETED PROTEIN C"/>
    <property type="match status" value="1"/>
</dbReference>
<reference key="1">
    <citation type="journal article" date="2005" name="Nature">
        <title>The genome of the social amoeba Dictyostelium discoideum.</title>
        <authorList>
            <person name="Eichinger L."/>
            <person name="Pachebat J.A."/>
            <person name="Gloeckner G."/>
            <person name="Rajandream M.A."/>
            <person name="Sucgang R."/>
            <person name="Berriman M."/>
            <person name="Song J."/>
            <person name="Olsen R."/>
            <person name="Szafranski K."/>
            <person name="Xu Q."/>
            <person name="Tunggal B."/>
            <person name="Kummerfeld S."/>
            <person name="Madera M."/>
            <person name="Konfortov B.A."/>
            <person name="Rivero F."/>
            <person name="Bankier A.T."/>
            <person name="Lehmann R."/>
            <person name="Hamlin N."/>
            <person name="Davies R."/>
            <person name="Gaudet P."/>
            <person name="Fey P."/>
            <person name="Pilcher K."/>
            <person name="Chen G."/>
            <person name="Saunders D."/>
            <person name="Sodergren E.J."/>
            <person name="Davis P."/>
            <person name="Kerhornou A."/>
            <person name="Nie X."/>
            <person name="Hall N."/>
            <person name="Anjard C."/>
            <person name="Hemphill L."/>
            <person name="Bason N."/>
            <person name="Farbrother P."/>
            <person name="Desany B."/>
            <person name="Just E."/>
            <person name="Morio T."/>
            <person name="Rost R."/>
            <person name="Churcher C.M."/>
            <person name="Cooper J."/>
            <person name="Haydock S."/>
            <person name="van Driessche N."/>
            <person name="Cronin A."/>
            <person name="Goodhead I."/>
            <person name="Muzny D.M."/>
            <person name="Mourier T."/>
            <person name="Pain A."/>
            <person name="Lu M."/>
            <person name="Harper D."/>
            <person name="Lindsay R."/>
            <person name="Hauser H."/>
            <person name="James K.D."/>
            <person name="Quiles M."/>
            <person name="Madan Babu M."/>
            <person name="Saito T."/>
            <person name="Buchrieser C."/>
            <person name="Wardroper A."/>
            <person name="Felder M."/>
            <person name="Thangavelu M."/>
            <person name="Johnson D."/>
            <person name="Knights A."/>
            <person name="Loulseged H."/>
            <person name="Mungall K.L."/>
            <person name="Oliver K."/>
            <person name="Price C."/>
            <person name="Quail M.A."/>
            <person name="Urushihara H."/>
            <person name="Hernandez J."/>
            <person name="Rabbinowitsch E."/>
            <person name="Steffen D."/>
            <person name="Sanders M."/>
            <person name="Ma J."/>
            <person name="Kohara Y."/>
            <person name="Sharp S."/>
            <person name="Simmonds M.N."/>
            <person name="Spiegler S."/>
            <person name="Tivey A."/>
            <person name="Sugano S."/>
            <person name="White B."/>
            <person name="Walker D."/>
            <person name="Woodward J.R."/>
            <person name="Winckler T."/>
            <person name="Tanaka Y."/>
            <person name="Shaulsky G."/>
            <person name="Schleicher M."/>
            <person name="Weinstock G.M."/>
            <person name="Rosenthal A."/>
            <person name="Cox E.C."/>
            <person name="Chisholm R.L."/>
            <person name="Gibbs R.A."/>
            <person name="Loomis W.F."/>
            <person name="Platzer M."/>
            <person name="Kay R.R."/>
            <person name="Williams J.G."/>
            <person name="Dear P.H."/>
            <person name="Noegel A.A."/>
            <person name="Barrell B.G."/>
            <person name="Kuspa A."/>
        </authorList>
    </citation>
    <scope>NUCLEOTIDE SEQUENCE [LARGE SCALE GENOMIC DNA]</scope>
    <source>
        <strain>AX4</strain>
    </source>
</reference>
<reference key="2">
    <citation type="journal article" date="2016" name="PLoS ONE">
        <title>Pycnosomes: condensed endosomal structures secreted by Dictyostelium amoebae.</title>
        <authorList>
            <person name="Sabra A."/>
            <person name="Leiba J."/>
            <person name="Mas L."/>
            <person name="Louwagie M."/>
            <person name="Coute Y."/>
            <person name="Journet A."/>
            <person name="Cosson P."/>
            <person name="Aubry L."/>
        </authorList>
    </citation>
    <scope>SUBCELLULAR LOCATION</scope>
</reference>
<sequence length="486" mass="46237">MKINIILLFVGLILAFAVLSNAISIKNDGGVNPFDNNNSGSGSGSGSGGGSSSSGSGTGQSSGTVSSSGSASNNTSSGSQSGNASSGSSSGSSSGSSSGSSSGSSSGSQSGNASSGSSSSGSSGSQSGNASSGTSSGSSSSSGSSQSGNASSGPSSGTTSSSGSSQSESSQSGNASSGPSSGTTSSSGSSQSESSQSESSQSGSASSGPSSGTTSSSGSSQSDSSSFTTTGSQGSSGSSGSSQSDSSSFTTTGSGSGSSQDSMSGSDSMSGSDSMSGSDSMSGSSFTGGNSGGSTSTGSGSYSGNPSLTGSSEYSSSSSGGGSGSHGGSSSHPNGWTDVGQFLLGLAEGLVSTVASNTKLCFQSVGSSITDFENAFQLIDSGFSRLSKPLIEQGLMDLGSGLLEVAIAFETCNVQNLASEIKALATNIESGELGILEVIVKETINIFHNGNQLTTEFKLTISDYKSQNYLGMGYNIGGIVGILLKD</sequence>
<evidence type="ECO:0000255" key="1"/>
<evidence type="ECO:0000256" key="2">
    <source>
        <dbReference type="SAM" id="MobiDB-lite"/>
    </source>
</evidence>
<evidence type="ECO:0000269" key="3">
    <source>
    </source>
</evidence>
<evidence type="ECO:0000303" key="4">
    <source>
    </source>
</evidence>
<evidence type="ECO:0000305" key="5"/>
<feature type="signal peptide" evidence="1">
    <location>
        <begin position="1"/>
        <end position="22"/>
    </location>
</feature>
<feature type="chain" id="PRO_0000361526" description="Secreted protein C">
    <location>
        <begin position="23"/>
        <end position="486"/>
    </location>
</feature>
<feature type="region of interest" description="Disordered" evidence="2">
    <location>
        <begin position="30"/>
        <end position="332"/>
    </location>
</feature>
<feature type="compositionally biased region" description="Gly residues" evidence="2">
    <location>
        <begin position="41"/>
        <end position="60"/>
    </location>
</feature>
<feature type="compositionally biased region" description="Low complexity" evidence="2">
    <location>
        <begin position="61"/>
        <end position="318"/>
    </location>
</feature>
<feature type="glycosylation site" description="N-linked (GlcNAc...) asparagine" evidence="1">
    <location>
        <position position="37"/>
    </location>
</feature>
<feature type="glycosylation site" description="N-linked (GlcNAc...) asparagine" evidence="1">
    <location>
        <position position="73"/>
    </location>
</feature>
<feature type="glycosylation site" description="N-linked (GlcNAc...) asparagine" evidence="1">
    <location>
        <position position="74"/>
    </location>
</feature>
<feature type="glycosylation site" description="N-linked (GlcNAc...) asparagine" evidence="1">
    <location>
        <position position="83"/>
    </location>
</feature>
<feature type="glycosylation site" description="N-linked (GlcNAc...) asparagine" evidence="1">
    <location>
        <position position="112"/>
    </location>
</feature>
<feature type="glycosylation site" description="N-linked (GlcNAc...) asparagine" evidence="1">
    <location>
        <position position="129"/>
    </location>
</feature>
<feature type="glycosylation site" description="N-linked (GlcNAc...) asparagine" evidence="1">
    <location>
        <position position="149"/>
    </location>
</feature>
<feature type="glycosylation site" description="N-linked (GlcNAc...) asparagine" evidence="1">
    <location>
        <position position="174"/>
    </location>
</feature>
<gene>
    <name evidence="4" type="primary">sctC</name>
    <name type="ORF">DDB_G0287399</name>
</gene>
<comment type="subcellular location">
    <subcellularLocation>
        <location evidence="3">Secreted</location>
    </subcellularLocation>
</comment>
<comment type="similarity">
    <text evidence="5">Belongs to the Sct family.</text>
</comment>
<organism>
    <name type="scientific">Dictyostelium discoideum</name>
    <name type="common">Social amoeba</name>
    <dbReference type="NCBI Taxonomy" id="44689"/>
    <lineage>
        <taxon>Eukaryota</taxon>
        <taxon>Amoebozoa</taxon>
        <taxon>Evosea</taxon>
        <taxon>Eumycetozoa</taxon>
        <taxon>Dictyostelia</taxon>
        <taxon>Dictyosteliales</taxon>
        <taxon>Dictyosteliaceae</taxon>
        <taxon>Dictyostelium</taxon>
    </lineage>
</organism>
<proteinExistence type="inferred from homology"/>